<accession>Q1GAD3</accession>
<gene>
    <name evidence="1" type="primary">pstB</name>
    <name type="ordered locus">Ldb0959</name>
</gene>
<feature type="chain" id="PRO_0000272466" description="Phosphate import ATP-binding protein PstB">
    <location>
        <begin position="1"/>
        <end position="252"/>
    </location>
</feature>
<feature type="domain" description="ABC transporter" evidence="1">
    <location>
        <begin position="6"/>
        <end position="247"/>
    </location>
</feature>
<feature type="binding site" evidence="1">
    <location>
        <begin position="38"/>
        <end position="45"/>
    </location>
    <ligand>
        <name>ATP</name>
        <dbReference type="ChEBI" id="CHEBI:30616"/>
    </ligand>
</feature>
<protein>
    <recommendedName>
        <fullName evidence="1">Phosphate import ATP-binding protein PstB</fullName>
        <ecNumber evidence="1">7.3.2.1</ecNumber>
    </recommendedName>
    <alternativeName>
        <fullName evidence="1">ABC phosphate transporter</fullName>
    </alternativeName>
    <alternativeName>
        <fullName evidence="1">Phosphate-transporting ATPase</fullName>
    </alternativeName>
</protein>
<reference key="1">
    <citation type="journal article" date="2006" name="Proc. Natl. Acad. Sci. U.S.A.">
        <title>The complete genome sequence of Lactobacillus bulgaricus reveals extensive and ongoing reductive evolution.</title>
        <authorList>
            <person name="van de Guchte M."/>
            <person name="Penaud S."/>
            <person name="Grimaldi C."/>
            <person name="Barbe V."/>
            <person name="Bryson K."/>
            <person name="Nicolas P."/>
            <person name="Robert C."/>
            <person name="Oztas S."/>
            <person name="Mangenot S."/>
            <person name="Couloux A."/>
            <person name="Loux V."/>
            <person name="Dervyn R."/>
            <person name="Bossy R."/>
            <person name="Bolotin A."/>
            <person name="Batto J.-M."/>
            <person name="Walunas T."/>
            <person name="Gibrat J.-F."/>
            <person name="Bessieres P."/>
            <person name="Weissenbach J."/>
            <person name="Ehrlich S.D."/>
            <person name="Maguin E."/>
        </authorList>
    </citation>
    <scope>NUCLEOTIDE SEQUENCE [LARGE SCALE GENOMIC DNA]</scope>
    <source>
        <strain>ATCC 11842 / DSM 20081 / BCRC 10696 / JCM 1002 / NBRC 13953 / NCIMB 11778 / NCTC 12712 / WDCM 00102 / Lb 14</strain>
    </source>
</reference>
<dbReference type="EC" id="7.3.2.1" evidence="1"/>
<dbReference type="EMBL" id="CR954253">
    <property type="protein sequence ID" value="CAI97761.1"/>
    <property type="molecule type" value="Genomic_DNA"/>
</dbReference>
<dbReference type="SMR" id="Q1GAD3"/>
<dbReference type="STRING" id="390333.Ldb0959"/>
<dbReference type="KEGG" id="ldb:Ldb0959"/>
<dbReference type="PATRIC" id="fig|390333.13.peg.626"/>
<dbReference type="eggNOG" id="COG1117">
    <property type="taxonomic scope" value="Bacteria"/>
</dbReference>
<dbReference type="HOGENOM" id="CLU_000604_1_22_9"/>
<dbReference type="Proteomes" id="UP000001259">
    <property type="component" value="Chromosome"/>
</dbReference>
<dbReference type="GO" id="GO:0005886">
    <property type="term" value="C:plasma membrane"/>
    <property type="evidence" value="ECO:0007669"/>
    <property type="project" value="UniProtKB-SubCell"/>
</dbReference>
<dbReference type="GO" id="GO:0005524">
    <property type="term" value="F:ATP binding"/>
    <property type="evidence" value="ECO:0007669"/>
    <property type="project" value="UniProtKB-KW"/>
</dbReference>
<dbReference type="GO" id="GO:0016887">
    <property type="term" value="F:ATP hydrolysis activity"/>
    <property type="evidence" value="ECO:0007669"/>
    <property type="project" value="InterPro"/>
</dbReference>
<dbReference type="GO" id="GO:0015415">
    <property type="term" value="F:ATPase-coupled phosphate ion transmembrane transporter activity"/>
    <property type="evidence" value="ECO:0007669"/>
    <property type="project" value="UniProtKB-EC"/>
</dbReference>
<dbReference type="GO" id="GO:0035435">
    <property type="term" value="P:phosphate ion transmembrane transport"/>
    <property type="evidence" value="ECO:0007669"/>
    <property type="project" value="InterPro"/>
</dbReference>
<dbReference type="CDD" id="cd03260">
    <property type="entry name" value="ABC_PstB_phosphate_transporter"/>
    <property type="match status" value="1"/>
</dbReference>
<dbReference type="FunFam" id="3.40.50.300:FF:000132">
    <property type="entry name" value="Phosphate import ATP-binding protein PstB"/>
    <property type="match status" value="1"/>
</dbReference>
<dbReference type="Gene3D" id="3.40.50.300">
    <property type="entry name" value="P-loop containing nucleotide triphosphate hydrolases"/>
    <property type="match status" value="1"/>
</dbReference>
<dbReference type="InterPro" id="IPR003593">
    <property type="entry name" value="AAA+_ATPase"/>
</dbReference>
<dbReference type="InterPro" id="IPR003439">
    <property type="entry name" value="ABC_transporter-like_ATP-bd"/>
</dbReference>
<dbReference type="InterPro" id="IPR017871">
    <property type="entry name" value="ABC_transporter-like_CS"/>
</dbReference>
<dbReference type="InterPro" id="IPR027417">
    <property type="entry name" value="P-loop_NTPase"/>
</dbReference>
<dbReference type="InterPro" id="IPR005670">
    <property type="entry name" value="PstB-like"/>
</dbReference>
<dbReference type="NCBIfam" id="TIGR00972">
    <property type="entry name" value="3a0107s01c2"/>
    <property type="match status" value="1"/>
</dbReference>
<dbReference type="PANTHER" id="PTHR43423">
    <property type="entry name" value="ABC TRANSPORTER I FAMILY MEMBER 17"/>
    <property type="match status" value="1"/>
</dbReference>
<dbReference type="PANTHER" id="PTHR43423:SF1">
    <property type="entry name" value="ABC TRANSPORTER I FAMILY MEMBER 17"/>
    <property type="match status" value="1"/>
</dbReference>
<dbReference type="Pfam" id="PF00005">
    <property type="entry name" value="ABC_tran"/>
    <property type="match status" value="1"/>
</dbReference>
<dbReference type="SMART" id="SM00382">
    <property type="entry name" value="AAA"/>
    <property type="match status" value="1"/>
</dbReference>
<dbReference type="SUPFAM" id="SSF52540">
    <property type="entry name" value="P-loop containing nucleoside triphosphate hydrolases"/>
    <property type="match status" value="1"/>
</dbReference>
<dbReference type="PROSITE" id="PS00211">
    <property type="entry name" value="ABC_TRANSPORTER_1"/>
    <property type="match status" value="1"/>
</dbReference>
<dbReference type="PROSITE" id="PS50893">
    <property type="entry name" value="ABC_TRANSPORTER_2"/>
    <property type="match status" value="1"/>
</dbReference>
<dbReference type="PROSITE" id="PS51238">
    <property type="entry name" value="PSTB"/>
    <property type="match status" value="1"/>
</dbReference>
<name>PSTB_LACDA</name>
<comment type="function">
    <text evidence="1">Part of the ABC transporter complex PstSACB involved in phosphate import. Responsible for energy coupling to the transport system.</text>
</comment>
<comment type="catalytic activity">
    <reaction evidence="1">
        <text>phosphate(out) + ATP + H2O = ADP + 2 phosphate(in) + H(+)</text>
        <dbReference type="Rhea" id="RHEA:24440"/>
        <dbReference type="ChEBI" id="CHEBI:15377"/>
        <dbReference type="ChEBI" id="CHEBI:15378"/>
        <dbReference type="ChEBI" id="CHEBI:30616"/>
        <dbReference type="ChEBI" id="CHEBI:43474"/>
        <dbReference type="ChEBI" id="CHEBI:456216"/>
        <dbReference type="EC" id="7.3.2.1"/>
    </reaction>
</comment>
<comment type="subunit">
    <text evidence="1">The complex is composed of two ATP-binding proteins (PstB), two transmembrane proteins (PstC and PstA) and a solute-binding protein (PstS).</text>
</comment>
<comment type="subcellular location">
    <subcellularLocation>
        <location evidence="1">Cell membrane</location>
        <topology evidence="1">Peripheral membrane protein</topology>
    </subcellularLocation>
</comment>
<comment type="similarity">
    <text evidence="1">Belongs to the ABC transporter superfamily. Phosphate importer (TC 3.A.1.7) family.</text>
</comment>
<keyword id="KW-0067">ATP-binding</keyword>
<keyword id="KW-1003">Cell membrane</keyword>
<keyword id="KW-0472">Membrane</keyword>
<keyword id="KW-0547">Nucleotide-binding</keyword>
<keyword id="KW-0592">Phosphate transport</keyword>
<keyword id="KW-1185">Reference proteome</keyword>
<keyword id="KW-1278">Translocase</keyword>
<keyword id="KW-0813">Transport</keyword>
<evidence type="ECO:0000255" key="1">
    <source>
        <dbReference type="HAMAP-Rule" id="MF_01702"/>
    </source>
</evidence>
<sequence length="252" mass="28399">MMEDKITIEKLNLYYSDFHALHDINMHIQKNEITAFIGPSGCGKSTLLRSLNRMNDLVEGCRIDGSIKLDGTDIYNGDLDVTVLRQRVGMVFQRPNPFPMSVYDNVAYGPRIHGITDKKELDEIVETSLKQAAIWDDLKDRLKKSALGLSGGQQQRLCIARALAVKPEVLLMDEPTSALDPISTSKIEELALELKKNYTIVIVTHNMQQAVRISDKTGFFLLGDLVEFGETDQLFSMPKDERTEKYITGRFG</sequence>
<proteinExistence type="inferred from homology"/>
<organism>
    <name type="scientific">Lactobacillus delbrueckii subsp. bulgaricus (strain ATCC 11842 / DSM 20081 / BCRC 10696 / JCM 1002 / NBRC 13953 / NCIMB 11778 / NCTC 12712 / WDCM 00102 / Lb 14)</name>
    <dbReference type="NCBI Taxonomy" id="390333"/>
    <lineage>
        <taxon>Bacteria</taxon>
        <taxon>Bacillati</taxon>
        <taxon>Bacillota</taxon>
        <taxon>Bacilli</taxon>
        <taxon>Lactobacillales</taxon>
        <taxon>Lactobacillaceae</taxon>
        <taxon>Lactobacillus</taxon>
    </lineage>
</organism>